<comment type="function">
    <text evidence="1">May play a role in DNA repair. It seems to be involved in an RecBC-independent recombinational process of DNA repair. It may act with RecF and RecO.</text>
</comment>
<comment type="similarity">
    <text evidence="1">Belongs to the RecR family.</text>
</comment>
<accession>Q5F8K5</accession>
<reference key="1">
    <citation type="submission" date="2003-03" db="EMBL/GenBank/DDBJ databases">
        <title>The complete genome sequence of Neisseria gonorrhoeae.</title>
        <authorList>
            <person name="Lewis L.A."/>
            <person name="Gillaspy A.F."/>
            <person name="McLaughlin R.E."/>
            <person name="Gipson M."/>
            <person name="Ducey T.F."/>
            <person name="Ownbey T."/>
            <person name="Hartman K."/>
            <person name="Nydick C."/>
            <person name="Carson M.B."/>
            <person name="Vaughn J."/>
            <person name="Thomson C."/>
            <person name="Song L."/>
            <person name="Lin S."/>
            <person name="Yuan X."/>
            <person name="Najar F."/>
            <person name="Zhan M."/>
            <person name="Ren Q."/>
            <person name="Zhu H."/>
            <person name="Qi S."/>
            <person name="Kenton S.M."/>
            <person name="Lai H."/>
            <person name="White J.D."/>
            <person name="Clifton S."/>
            <person name="Roe B.A."/>
            <person name="Dyer D.W."/>
        </authorList>
    </citation>
    <scope>NUCLEOTIDE SEQUENCE [LARGE SCALE GENOMIC DNA]</scope>
    <source>
        <strain>ATCC 700825 / FA 1090</strain>
    </source>
</reference>
<feature type="chain" id="PRO_0000190353" description="Recombination protein RecR">
    <location>
        <begin position="1"/>
        <end position="205"/>
    </location>
</feature>
<feature type="domain" description="Toprim" evidence="1">
    <location>
        <begin position="82"/>
        <end position="177"/>
    </location>
</feature>
<feature type="zinc finger region" description="C4-type" evidence="1">
    <location>
        <begin position="59"/>
        <end position="74"/>
    </location>
</feature>
<organism>
    <name type="scientific">Neisseria gonorrhoeae (strain ATCC 700825 / FA 1090)</name>
    <dbReference type="NCBI Taxonomy" id="242231"/>
    <lineage>
        <taxon>Bacteria</taxon>
        <taxon>Pseudomonadati</taxon>
        <taxon>Pseudomonadota</taxon>
        <taxon>Betaproteobacteria</taxon>
        <taxon>Neisseriales</taxon>
        <taxon>Neisseriaceae</taxon>
        <taxon>Neisseria</taxon>
    </lineage>
</organism>
<keyword id="KW-0227">DNA damage</keyword>
<keyword id="KW-0233">DNA recombination</keyword>
<keyword id="KW-0234">DNA repair</keyword>
<keyword id="KW-0479">Metal-binding</keyword>
<keyword id="KW-1185">Reference proteome</keyword>
<keyword id="KW-0862">Zinc</keyword>
<keyword id="KW-0863">Zinc-finger</keyword>
<protein>
    <recommendedName>
        <fullName evidence="1">Recombination protein RecR</fullName>
    </recommendedName>
</protein>
<dbReference type="EMBL" id="AE004969">
    <property type="protein sequence ID" value="AAW89482.1"/>
    <property type="molecule type" value="Genomic_DNA"/>
</dbReference>
<dbReference type="RefSeq" id="WP_003706246.1">
    <property type="nucleotide sequence ID" value="NC_002946.2"/>
</dbReference>
<dbReference type="RefSeq" id="YP_207894.1">
    <property type="nucleotide sequence ID" value="NC_002946.2"/>
</dbReference>
<dbReference type="SMR" id="Q5F8K5"/>
<dbReference type="STRING" id="242231.NGO_0767"/>
<dbReference type="KEGG" id="ngo:NGO_0767"/>
<dbReference type="PATRIC" id="fig|242231.10.peg.914"/>
<dbReference type="HOGENOM" id="CLU_060739_1_2_4"/>
<dbReference type="Proteomes" id="UP000000535">
    <property type="component" value="Chromosome"/>
</dbReference>
<dbReference type="GO" id="GO:0003677">
    <property type="term" value="F:DNA binding"/>
    <property type="evidence" value="ECO:0007669"/>
    <property type="project" value="UniProtKB-UniRule"/>
</dbReference>
<dbReference type="GO" id="GO:0008270">
    <property type="term" value="F:zinc ion binding"/>
    <property type="evidence" value="ECO:0007669"/>
    <property type="project" value="UniProtKB-KW"/>
</dbReference>
<dbReference type="GO" id="GO:0006310">
    <property type="term" value="P:DNA recombination"/>
    <property type="evidence" value="ECO:0007669"/>
    <property type="project" value="UniProtKB-UniRule"/>
</dbReference>
<dbReference type="GO" id="GO:0006281">
    <property type="term" value="P:DNA repair"/>
    <property type="evidence" value="ECO:0007669"/>
    <property type="project" value="UniProtKB-UniRule"/>
</dbReference>
<dbReference type="CDD" id="cd01025">
    <property type="entry name" value="TOPRIM_recR"/>
    <property type="match status" value="1"/>
</dbReference>
<dbReference type="Gene3D" id="3.40.1360.10">
    <property type="match status" value="1"/>
</dbReference>
<dbReference type="Gene3D" id="1.10.8.420">
    <property type="entry name" value="RecR Domain 1"/>
    <property type="match status" value="1"/>
</dbReference>
<dbReference type="HAMAP" id="MF_00017">
    <property type="entry name" value="RecR"/>
    <property type="match status" value="1"/>
</dbReference>
<dbReference type="InterPro" id="IPR000093">
    <property type="entry name" value="DNA_Rcmb_RecR"/>
</dbReference>
<dbReference type="InterPro" id="IPR023627">
    <property type="entry name" value="Rcmb_RecR"/>
</dbReference>
<dbReference type="InterPro" id="IPR015967">
    <property type="entry name" value="Rcmb_RecR_Znf"/>
</dbReference>
<dbReference type="InterPro" id="IPR006171">
    <property type="entry name" value="TOPRIM_dom"/>
</dbReference>
<dbReference type="InterPro" id="IPR034137">
    <property type="entry name" value="TOPRIM_RecR"/>
</dbReference>
<dbReference type="NCBIfam" id="TIGR00615">
    <property type="entry name" value="recR"/>
    <property type="match status" value="1"/>
</dbReference>
<dbReference type="PANTHER" id="PTHR30446">
    <property type="entry name" value="RECOMBINATION PROTEIN RECR"/>
    <property type="match status" value="1"/>
</dbReference>
<dbReference type="PANTHER" id="PTHR30446:SF0">
    <property type="entry name" value="RECOMBINATION PROTEIN RECR"/>
    <property type="match status" value="1"/>
</dbReference>
<dbReference type="Pfam" id="PF21175">
    <property type="entry name" value="RecR_C"/>
    <property type="match status" value="1"/>
</dbReference>
<dbReference type="Pfam" id="PF21176">
    <property type="entry name" value="RecR_HhH"/>
    <property type="match status" value="1"/>
</dbReference>
<dbReference type="Pfam" id="PF02132">
    <property type="entry name" value="RecR_ZnF"/>
    <property type="match status" value="1"/>
</dbReference>
<dbReference type="Pfam" id="PF13662">
    <property type="entry name" value="Toprim_4"/>
    <property type="match status" value="1"/>
</dbReference>
<dbReference type="SUPFAM" id="SSF111304">
    <property type="entry name" value="Recombination protein RecR"/>
    <property type="match status" value="1"/>
</dbReference>
<dbReference type="PROSITE" id="PS01300">
    <property type="entry name" value="RECR"/>
    <property type="match status" value="1"/>
</dbReference>
<dbReference type="PROSITE" id="PS50880">
    <property type="entry name" value="TOPRIM"/>
    <property type="match status" value="1"/>
</dbReference>
<evidence type="ECO:0000255" key="1">
    <source>
        <dbReference type="HAMAP-Rule" id="MF_00017"/>
    </source>
</evidence>
<sequence length="205" mass="22434">MNSKKQDAFQRLIGALKVLPNVGPKSAQRMAYHLLQQKRKEAEELVDALQTALRQVCHCARCNTFCEGGLCDICADETRDGRRLMVVHMPADVSNIEAANCHDGLYFVLMGQINTALGMDVSAIALDRLAQRLDGGEIEEIIIATAFTAEGNATAYVLSEFFKNLPYKVSRLSQGIPLGGELEYVDAGTLAQAVYERRLIKEGGA</sequence>
<gene>
    <name evidence="1" type="primary">recR</name>
    <name type="ordered locus">NGO_0767</name>
</gene>
<name>RECR_NEIG1</name>
<proteinExistence type="inferred from homology"/>